<sequence>MITLITHVINPLAYIVPVLLAVAFLTLLERKVLGYMQLRKGPNIVGPYGLLQPIADGLKLFIKETVRPSTSSPFLFLATPMLALTLALTLWAPMPIPYPVTDLNLGVLFVLALSSLAVYSILGSGWASNSKYALIGELRAVAQTISYEVSLGLILLSVIIITGGFTLQTFNVAQESIWLLVPAWPLAAMWYISTLAETNRAPFDLTEGESELVSGFNVEYAGGPFALFFLAEYANILLMNTLSAVLFLGASHIPAFPELTALNLMTKAALLSVVFLWVRASYPRFRYDQLMHLVWKSFLPLTLALVLWHLALPIALAGLPPQL</sequence>
<keyword id="KW-0249">Electron transport</keyword>
<keyword id="KW-0472">Membrane</keyword>
<keyword id="KW-0496">Mitochondrion</keyword>
<keyword id="KW-0999">Mitochondrion inner membrane</keyword>
<keyword id="KW-0520">NAD</keyword>
<keyword id="KW-0679">Respiratory chain</keyword>
<keyword id="KW-1278">Translocase</keyword>
<keyword id="KW-0812">Transmembrane</keyword>
<keyword id="KW-1133">Transmembrane helix</keyword>
<keyword id="KW-0813">Transport</keyword>
<keyword id="KW-0830">Ubiquinone</keyword>
<gene>
    <name type="primary">MT-ND1</name>
    <name type="synonym">MTND1</name>
    <name type="synonym">NADH1</name>
    <name type="synonym">ND1</name>
</gene>
<organism>
    <name type="scientific">Oncorhynchus mykiss</name>
    <name type="common">Rainbow trout</name>
    <name type="synonym">Salmo gairdneri</name>
    <dbReference type="NCBI Taxonomy" id="8022"/>
    <lineage>
        <taxon>Eukaryota</taxon>
        <taxon>Metazoa</taxon>
        <taxon>Chordata</taxon>
        <taxon>Craniata</taxon>
        <taxon>Vertebrata</taxon>
        <taxon>Euteleostomi</taxon>
        <taxon>Actinopterygii</taxon>
        <taxon>Neopterygii</taxon>
        <taxon>Teleostei</taxon>
        <taxon>Protacanthopterygii</taxon>
        <taxon>Salmoniformes</taxon>
        <taxon>Salmonidae</taxon>
        <taxon>Salmoninae</taxon>
        <taxon>Oncorhynchus</taxon>
    </lineage>
</organism>
<protein>
    <recommendedName>
        <fullName>NADH-ubiquinone oxidoreductase chain 1</fullName>
        <ecNumber>7.1.1.2</ecNumber>
    </recommendedName>
    <alternativeName>
        <fullName>NADH dehydrogenase subunit 1</fullName>
    </alternativeName>
</protein>
<evidence type="ECO:0000250" key="1"/>
<evidence type="ECO:0000255" key="2"/>
<evidence type="ECO:0000305" key="3"/>
<dbReference type="EC" id="7.1.1.2"/>
<dbReference type="EMBL" id="L29771">
    <property type="protein sequence ID" value="AAB03347.1"/>
    <property type="molecule type" value="Genomic_DNA"/>
</dbReference>
<dbReference type="PIR" id="T09857">
    <property type="entry name" value="T09857"/>
</dbReference>
<dbReference type="RefSeq" id="NP_008290.1">
    <property type="nucleotide sequence ID" value="NC_001717.1"/>
</dbReference>
<dbReference type="SMR" id="P48174"/>
<dbReference type="GeneID" id="807982"/>
<dbReference type="KEGG" id="omy:807982"/>
<dbReference type="CTD" id="4535"/>
<dbReference type="OrthoDB" id="531329at2759"/>
<dbReference type="Proteomes" id="UP000694395">
    <property type="component" value="Unplaced"/>
</dbReference>
<dbReference type="GO" id="GO:0005743">
    <property type="term" value="C:mitochondrial inner membrane"/>
    <property type="evidence" value="ECO:0007669"/>
    <property type="project" value="UniProtKB-SubCell"/>
</dbReference>
<dbReference type="GO" id="GO:0008137">
    <property type="term" value="F:NADH dehydrogenase (ubiquinone) activity"/>
    <property type="evidence" value="ECO:0007669"/>
    <property type="project" value="UniProtKB-EC"/>
</dbReference>
<dbReference type="GO" id="GO:0009060">
    <property type="term" value="P:aerobic respiration"/>
    <property type="evidence" value="ECO:0007669"/>
    <property type="project" value="TreeGrafter"/>
</dbReference>
<dbReference type="HAMAP" id="MF_01350">
    <property type="entry name" value="NDH1_NuoH"/>
    <property type="match status" value="1"/>
</dbReference>
<dbReference type="InterPro" id="IPR001694">
    <property type="entry name" value="NADH_UbQ_OxRdtase_su1/FPO"/>
</dbReference>
<dbReference type="InterPro" id="IPR018086">
    <property type="entry name" value="NADH_UbQ_OxRdtase_su1_CS"/>
</dbReference>
<dbReference type="PANTHER" id="PTHR11432">
    <property type="entry name" value="NADH DEHYDROGENASE SUBUNIT 1"/>
    <property type="match status" value="1"/>
</dbReference>
<dbReference type="PANTHER" id="PTHR11432:SF3">
    <property type="entry name" value="NADH-UBIQUINONE OXIDOREDUCTASE CHAIN 1"/>
    <property type="match status" value="1"/>
</dbReference>
<dbReference type="Pfam" id="PF00146">
    <property type="entry name" value="NADHdh"/>
    <property type="match status" value="1"/>
</dbReference>
<dbReference type="PROSITE" id="PS00667">
    <property type="entry name" value="COMPLEX1_ND1_1"/>
    <property type="match status" value="1"/>
</dbReference>
<dbReference type="PROSITE" id="PS00668">
    <property type="entry name" value="COMPLEX1_ND1_2"/>
    <property type="match status" value="1"/>
</dbReference>
<feature type="chain" id="PRO_0000117442" description="NADH-ubiquinone oxidoreductase chain 1">
    <location>
        <begin position="1"/>
        <end position="323"/>
    </location>
</feature>
<feature type="transmembrane region" description="Helical" evidence="2">
    <location>
        <begin position="8"/>
        <end position="28"/>
    </location>
</feature>
<feature type="transmembrane region" description="Helical" evidence="2">
    <location>
        <begin position="74"/>
        <end position="94"/>
    </location>
</feature>
<feature type="transmembrane region" description="Helical" evidence="2">
    <location>
        <begin position="105"/>
        <end position="125"/>
    </location>
</feature>
<feature type="transmembrane region" description="Helical" evidence="2">
    <location>
        <begin position="145"/>
        <end position="165"/>
    </location>
</feature>
<feature type="transmembrane region" description="Helical" evidence="2">
    <location>
        <begin position="176"/>
        <end position="196"/>
    </location>
</feature>
<feature type="transmembrane region" description="Helical" evidence="2">
    <location>
        <begin position="236"/>
        <end position="256"/>
    </location>
</feature>
<feature type="transmembrane region" description="Helical" evidence="2">
    <location>
        <begin position="258"/>
        <end position="278"/>
    </location>
</feature>
<feature type="transmembrane region" description="Helical" evidence="2">
    <location>
        <begin position="298"/>
        <end position="318"/>
    </location>
</feature>
<accession>P48174</accession>
<comment type="function">
    <text evidence="1">Core subunit of the mitochondrial membrane respiratory chain NADH dehydrogenase (Complex I) that is believed to belong to the minimal assembly required for catalysis. Complex I functions in the transfer of electrons from NADH to the respiratory chain. The immediate electron acceptor for the enzyme is believed to be ubiquinone (By similarity).</text>
</comment>
<comment type="catalytic activity">
    <reaction>
        <text>a ubiquinone + NADH + 5 H(+)(in) = a ubiquinol + NAD(+) + 4 H(+)(out)</text>
        <dbReference type="Rhea" id="RHEA:29091"/>
        <dbReference type="Rhea" id="RHEA-COMP:9565"/>
        <dbReference type="Rhea" id="RHEA-COMP:9566"/>
        <dbReference type="ChEBI" id="CHEBI:15378"/>
        <dbReference type="ChEBI" id="CHEBI:16389"/>
        <dbReference type="ChEBI" id="CHEBI:17976"/>
        <dbReference type="ChEBI" id="CHEBI:57540"/>
        <dbReference type="ChEBI" id="CHEBI:57945"/>
        <dbReference type="EC" id="7.1.1.2"/>
    </reaction>
</comment>
<comment type="subcellular location">
    <subcellularLocation>
        <location evidence="1">Mitochondrion inner membrane</location>
        <topology evidence="1">Multi-pass membrane protein</topology>
    </subcellularLocation>
</comment>
<comment type="similarity">
    <text evidence="3">Belongs to the complex I subunit 1 family.</text>
</comment>
<reference key="1">
    <citation type="journal article" date="1995" name="J. Mol. Evol.">
        <title>The complete nucleotide sequence of the mitochondrial DNA genome of the rainbow trout, Oncorhynchus mykiss.</title>
        <authorList>
            <person name="Zardoya R."/>
            <person name="Garrido-Pertierra A."/>
            <person name="Bautista J.M."/>
        </authorList>
    </citation>
    <scope>NUCLEOTIDE SEQUENCE [GENOMIC DNA]</scope>
    <source>
        <tissue>Liver</tissue>
    </source>
</reference>
<name>NU1M_ONCMY</name>
<geneLocation type="mitochondrion"/>
<proteinExistence type="inferred from homology"/>